<keyword id="KW-0460">Magnesium</keyword>
<keyword id="KW-0479">Metal-binding</keyword>
<keyword id="KW-0784">Thiamine biosynthesis</keyword>
<keyword id="KW-0808">Transferase</keyword>
<organism>
    <name type="scientific">Methanococcus vannielii (strain ATCC 35089 / DSM 1224 / JCM 13029 / OCM 148 / SB)</name>
    <dbReference type="NCBI Taxonomy" id="406327"/>
    <lineage>
        <taxon>Archaea</taxon>
        <taxon>Methanobacteriati</taxon>
        <taxon>Methanobacteriota</taxon>
        <taxon>Methanomada group</taxon>
        <taxon>Methanococci</taxon>
        <taxon>Methanococcales</taxon>
        <taxon>Methanococcaceae</taxon>
        <taxon>Methanococcus</taxon>
    </lineage>
</organism>
<feature type="chain" id="PRO_1000008152" description="Thiamine-phosphate synthase">
    <location>
        <begin position="1"/>
        <end position="206"/>
    </location>
</feature>
<feature type="binding site" evidence="1">
    <location>
        <begin position="36"/>
        <end position="40"/>
    </location>
    <ligand>
        <name>4-amino-2-methyl-5-(diphosphooxymethyl)pyrimidine</name>
        <dbReference type="ChEBI" id="CHEBI:57841"/>
    </ligand>
</feature>
<feature type="binding site" evidence="1">
    <location>
        <position position="68"/>
    </location>
    <ligand>
        <name>4-amino-2-methyl-5-(diphosphooxymethyl)pyrimidine</name>
        <dbReference type="ChEBI" id="CHEBI:57841"/>
    </ligand>
</feature>
<feature type="binding site" evidence="1">
    <location>
        <position position="69"/>
    </location>
    <ligand>
        <name>Mg(2+)</name>
        <dbReference type="ChEBI" id="CHEBI:18420"/>
    </ligand>
</feature>
<feature type="binding site" evidence="1">
    <location>
        <position position="88"/>
    </location>
    <ligand>
        <name>Mg(2+)</name>
        <dbReference type="ChEBI" id="CHEBI:18420"/>
    </ligand>
</feature>
<feature type="binding site" evidence="1">
    <location>
        <position position="106"/>
    </location>
    <ligand>
        <name>4-amino-2-methyl-5-(diphosphooxymethyl)pyrimidine</name>
        <dbReference type="ChEBI" id="CHEBI:57841"/>
    </ligand>
</feature>
<feature type="binding site" evidence="1">
    <location>
        <begin position="132"/>
        <end position="134"/>
    </location>
    <ligand>
        <name>2-[(2R,5Z)-2-carboxy-4-methylthiazol-5(2H)-ylidene]ethyl phosphate</name>
        <dbReference type="ChEBI" id="CHEBI:62899"/>
    </ligand>
</feature>
<feature type="binding site" evidence="1">
    <location>
        <position position="135"/>
    </location>
    <ligand>
        <name>4-amino-2-methyl-5-(diphosphooxymethyl)pyrimidine</name>
        <dbReference type="ChEBI" id="CHEBI:57841"/>
    </ligand>
</feature>
<feature type="binding site" evidence="1">
    <location>
        <position position="162"/>
    </location>
    <ligand>
        <name>2-[(2R,5Z)-2-carboxy-4-methylthiazol-5(2H)-ylidene]ethyl phosphate</name>
        <dbReference type="ChEBI" id="CHEBI:62899"/>
    </ligand>
</feature>
<feature type="binding site" evidence="1">
    <location>
        <begin position="182"/>
        <end position="183"/>
    </location>
    <ligand>
        <name>2-[(2R,5Z)-2-carboxy-4-methylthiazol-5(2H)-ylidene]ethyl phosphate</name>
        <dbReference type="ChEBI" id="CHEBI:62899"/>
    </ligand>
</feature>
<comment type="function">
    <text evidence="1">Condenses 4-methyl-5-(beta-hydroxyethyl)thiazole monophosphate (THZ-P) and 2-methyl-4-amino-5-hydroxymethyl pyrimidine pyrophosphate (HMP-PP) to form thiamine monophosphate (TMP).</text>
</comment>
<comment type="catalytic activity">
    <reaction evidence="1">
        <text>2-[(2R,5Z)-2-carboxy-4-methylthiazol-5(2H)-ylidene]ethyl phosphate + 4-amino-2-methyl-5-(diphosphooxymethyl)pyrimidine + 2 H(+) = thiamine phosphate + CO2 + diphosphate</text>
        <dbReference type="Rhea" id="RHEA:47844"/>
        <dbReference type="ChEBI" id="CHEBI:15378"/>
        <dbReference type="ChEBI" id="CHEBI:16526"/>
        <dbReference type="ChEBI" id="CHEBI:33019"/>
        <dbReference type="ChEBI" id="CHEBI:37575"/>
        <dbReference type="ChEBI" id="CHEBI:57841"/>
        <dbReference type="ChEBI" id="CHEBI:62899"/>
        <dbReference type="EC" id="2.5.1.3"/>
    </reaction>
</comment>
<comment type="catalytic activity">
    <reaction evidence="1">
        <text>2-(2-carboxy-4-methylthiazol-5-yl)ethyl phosphate + 4-amino-2-methyl-5-(diphosphooxymethyl)pyrimidine + 2 H(+) = thiamine phosphate + CO2 + diphosphate</text>
        <dbReference type="Rhea" id="RHEA:47848"/>
        <dbReference type="ChEBI" id="CHEBI:15378"/>
        <dbReference type="ChEBI" id="CHEBI:16526"/>
        <dbReference type="ChEBI" id="CHEBI:33019"/>
        <dbReference type="ChEBI" id="CHEBI:37575"/>
        <dbReference type="ChEBI" id="CHEBI:57841"/>
        <dbReference type="ChEBI" id="CHEBI:62890"/>
        <dbReference type="EC" id="2.5.1.3"/>
    </reaction>
</comment>
<comment type="catalytic activity">
    <reaction evidence="1">
        <text>4-methyl-5-(2-phosphooxyethyl)-thiazole + 4-amino-2-methyl-5-(diphosphooxymethyl)pyrimidine + H(+) = thiamine phosphate + diphosphate</text>
        <dbReference type="Rhea" id="RHEA:22328"/>
        <dbReference type="ChEBI" id="CHEBI:15378"/>
        <dbReference type="ChEBI" id="CHEBI:33019"/>
        <dbReference type="ChEBI" id="CHEBI:37575"/>
        <dbReference type="ChEBI" id="CHEBI:57841"/>
        <dbReference type="ChEBI" id="CHEBI:58296"/>
        <dbReference type="EC" id="2.5.1.3"/>
    </reaction>
</comment>
<comment type="cofactor">
    <cofactor evidence="1">
        <name>Mg(2+)</name>
        <dbReference type="ChEBI" id="CHEBI:18420"/>
    </cofactor>
    <text evidence="1">Binds 1 Mg(2+) ion per subunit.</text>
</comment>
<comment type="pathway">
    <text evidence="1">Cofactor biosynthesis; thiamine diphosphate biosynthesis; thiamine phosphate from 4-amino-2-methyl-5-diphosphomethylpyrimidine and 4-methyl-5-(2-phosphoethyl)-thiazole: step 1/1.</text>
</comment>
<comment type="similarity">
    <text evidence="1">Belongs to the thiamine-phosphate synthase family.</text>
</comment>
<gene>
    <name evidence="1" type="primary">thiE</name>
    <name type="ordered locus">Mevan_0461</name>
</gene>
<proteinExistence type="inferred from homology"/>
<sequence>MTFKNKLKFYVITDRKYSCEVYSVEQALKGGATAVQLRMKSSNTREMVEVGQKIRKLTLEYDALFFVNDRLDIAQAVKSDGIHVGIDDISISKIKEIAPELIIGASAYNINEMKIAESEGADYLGVGSVYPTNTKLDARYLGLNGLKELSNCSNLPVVAIGGINHENVKEVLMCGVSGVAVVSAIVGANDIIFSAKKMNEIIKKYI</sequence>
<dbReference type="EC" id="2.5.1.3" evidence="1"/>
<dbReference type="EMBL" id="CP000742">
    <property type="protein sequence ID" value="ABR54368.1"/>
    <property type="molecule type" value="Genomic_DNA"/>
</dbReference>
<dbReference type="RefSeq" id="WP_011972271.1">
    <property type="nucleotide sequence ID" value="NC_009634.1"/>
</dbReference>
<dbReference type="SMR" id="A6UPE6"/>
<dbReference type="STRING" id="406327.Mevan_0461"/>
<dbReference type="GeneID" id="5325364"/>
<dbReference type="KEGG" id="mvn:Mevan_0461"/>
<dbReference type="eggNOG" id="arCOG01089">
    <property type="taxonomic scope" value="Archaea"/>
</dbReference>
<dbReference type="HOGENOM" id="CLU_018272_3_2_2"/>
<dbReference type="OrthoDB" id="85572at2157"/>
<dbReference type="UniPathway" id="UPA00060">
    <property type="reaction ID" value="UER00141"/>
</dbReference>
<dbReference type="Proteomes" id="UP000001107">
    <property type="component" value="Chromosome"/>
</dbReference>
<dbReference type="GO" id="GO:0005737">
    <property type="term" value="C:cytoplasm"/>
    <property type="evidence" value="ECO:0007669"/>
    <property type="project" value="TreeGrafter"/>
</dbReference>
<dbReference type="GO" id="GO:0000287">
    <property type="term" value="F:magnesium ion binding"/>
    <property type="evidence" value="ECO:0007669"/>
    <property type="project" value="UniProtKB-UniRule"/>
</dbReference>
<dbReference type="GO" id="GO:0004789">
    <property type="term" value="F:thiamine-phosphate diphosphorylase activity"/>
    <property type="evidence" value="ECO:0007669"/>
    <property type="project" value="UniProtKB-UniRule"/>
</dbReference>
<dbReference type="GO" id="GO:0009228">
    <property type="term" value="P:thiamine biosynthetic process"/>
    <property type="evidence" value="ECO:0007669"/>
    <property type="project" value="UniProtKB-KW"/>
</dbReference>
<dbReference type="GO" id="GO:0009229">
    <property type="term" value="P:thiamine diphosphate biosynthetic process"/>
    <property type="evidence" value="ECO:0007669"/>
    <property type="project" value="UniProtKB-UniRule"/>
</dbReference>
<dbReference type="CDD" id="cd00564">
    <property type="entry name" value="TMP_TenI"/>
    <property type="match status" value="1"/>
</dbReference>
<dbReference type="FunFam" id="3.20.20.70:FF:000096">
    <property type="entry name" value="Thiamine-phosphate synthase"/>
    <property type="match status" value="1"/>
</dbReference>
<dbReference type="Gene3D" id="3.20.20.70">
    <property type="entry name" value="Aldolase class I"/>
    <property type="match status" value="1"/>
</dbReference>
<dbReference type="HAMAP" id="MF_00097">
    <property type="entry name" value="TMP_synthase"/>
    <property type="match status" value="1"/>
</dbReference>
<dbReference type="InterPro" id="IPR013785">
    <property type="entry name" value="Aldolase_TIM"/>
</dbReference>
<dbReference type="InterPro" id="IPR036206">
    <property type="entry name" value="ThiamineP_synth_sf"/>
</dbReference>
<dbReference type="InterPro" id="IPR022998">
    <property type="entry name" value="ThiamineP_synth_TenI"/>
</dbReference>
<dbReference type="InterPro" id="IPR034291">
    <property type="entry name" value="TMP_synthase"/>
</dbReference>
<dbReference type="NCBIfam" id="TIGR00693">
    <property type="entry name" value="thiE"/>
    <property type="match status" value="1"/>
</dbReference>
<dbReference type="PANTHER" id="PTHR20857:SF23">
    <property type="entry name" value="THIAMINE BIOSYNTHETIC BIFUNCTIONAL ENZYME"/>
    <property type="match status" value="1"/>
</dbReference>
<dbReference type="PANTHER" id="PTHR20857">
    <property type="entry name" value="THIAMINE-PHOSPHATE PYROPHOSPHORYLASE"/>
    <property type="match status" value="1"/>
</dbReference>
<dbReference type="Pfam" id="PF02581">
    <property type="entry name" value="TMP-TENI"/>
    <property type="match status" value="1"/>
</dbReference>
<dbReference type="SUPFAM" id="SSF51391">
    <property type="entry name" value="Thiamin phosphate synthase"/>
    <property type="match status" value="1"/>
</dbReference>
<reference key="1">
    <citation type="submission" date="2007-06" db="EMBL/GenBank/DDBJ databases">
        <title>Complete sequence of Methanococcus vannielii SB.</title>
        <authorList>
            <consortium name="US DOE Joint Genome Institute"/>
            <person name="Copeland A."/>
            <person name="Lucas S."/>
            <person name="Lapidus A."/>
            <person name="Barry K."/>
            <person name="Glavina del Rio T."/>
            <person name="Dalin E."/>
            <person name="Tice H."/>
            <person name="Pitluck S."/>
            <person name="Chain P."/>
            <person name="Malfatti S."/>
            <person name="Shin M."/>
            <person name="Vergez L."/>
            <person name="Schmutz J."/>
            <person name="Larimer F."/>
            <person name="Land M."/>
            <person name="Hauser L."/>
            <person name="Kyrpides N."/>
            <person name="Anderson I."/>
            <person name="Sieprawska-Lupa M."/>
            <person name="Whitman W.B."/>
            <person name="Richardson P."/>
        </authorList>
    </citation>
    <scope>NUCLEOTIDE SEQUENCE [LARGE SCALE GENOMIC DNA]</scope>
    <source>
        <strain>ATCC 35089 / DSM 1224 / JCM 13029 / OCM 148 / SB</strain>
    </source>
</reference>
<evidence type="ECO:0000255" key="1">
    <source>
        <dbReference type="HAMAP-Rule" id="MF_00097"/>
    </source>
</evidence>
<accession>A6UPE6</accession>
<protein>
    <recommendedName>
        <fullName evidence="1">Thiamine-phosphate synthase</fullName>
        <shortName evidence="1">TP synthase</shortName>
        <shortName evidence="1">TPS</shortName>
        <ecNumber evidence="1">2.5.1.3</ecNumber>
    </recommendedName>
    <alternativeName>
        <fullName evidence="1">Thiamine-phosphate pyrophosphorylase</fullName>
        <shortName evidence="1">TMP pyrophosphorylase</shortName>
        <shortName evidence="1">TMP-PPase</shortName>
    </alternativeName>
</protein>
<name>THIE_METVS</name>